<evidence type="ECO:0000255" key="1">
    <source>
        <dbReference type="HAMAP-Rule" id="MF_00083"/>
    </source>
</evidence>
<proteinExistence type="inferred from homology"/>
<sequence>MIKLIVGLGNPGAEYTATRHNAGFWLVDQLAREAGATLRDERRFHGFYAKARLFGEEVHLLEPQTYMNRSGQAVVALAHFFKILPTEILVAHDELDLPPGAAKLKLGGGSGGHNGLKDISAHLSSQQYWRLRIGIGHPRDLIPESARAGAKPDVANFVLKPPRKDEQDLIDAAIERALAVMPTAIKGETERAMMQLHRNGA</sequence>
<dbReference type="EC" id="3.1.1.29" evidence="1"/>
<dbReference type="EMBL" id="CP000546">
    <property type="protein sequence ID" value="ABN01314.1"/>
    <property type="molecule type" value="Genomic_DNA"/>
</dbReference>
<dbReference type="RefSeq" id="WP_004202941.1">
    <property type="nucleotide sequence ID" value="NC_008836.1"/>
</dbReference>
<dbReference type="SMR" id="A2S6B4"/>
<dbReference type="GeneID" id="93059040"/>
<dbReference type="KEGG" id="bml:BMA10229_A1500"/>
<dbReference type="HOGENOM" id="CLU_062456_3_1_4"/>
<dbReference type="Proteomes" id="UP000002283">
    <property type="component" value="Chromosome I"/>
</dbReference>
<dbReference type="GO" id="GO:0005737">
    <property type="term" value="C:cytoplasm"/>
    <property type="evidence" value="ECO:0007669"/>
    <property type="project" value="UniProtKB-SubCell"/>
</dbReference>
<dbReference type="GO" id="GO:0004045">
    <property type="term" value="F:peptidyl-tRNA hydrolase activity"/>
    <property type="evidence" value="ECO:0007669"/>
    <property type="project" value="UniProtKB-UniRule"/>
</dbReference>
<dbReference type="GO" id="GO:0000049">
    <property type="term" value="F:tRNA binding"/>
    <property type="evidence" value="ECO:0007669"/>
    <property type="project" value="UniProtKB-UniRule"/>
</dbReference>
<dbReference type="GO" id="GO:0006515">
    <property type="term" value="P:protein quality control for misfolded or incompletely synthesized proteins"/>
    <property type="evidence" value="ECO:0007669"/>
    <property type="project" value="UniProtKB-UniRule"/>
</dbReference>
<dbReference type="GO" id="GO:0072344">
    <property type="term" value="P:rescue of stalled ribosome"/>
    <property type="evidence" value="ECO:0007669"/>
    <property type="project" value="UniProtKB-UniRule"/>
</dbReference>
<dbReference type="CDD" id="cd00462">
    <property type="entry name" value="PTH"/>
    <property type="match status" value="1"/>
</dbReference>
<dbReference type="FunFam" id="3.40.50.1470:FF:000001">
    <property type="entry name" value="Peptidyl-tRNA hydrolase"/>
    <property type="match status" value="1"/>
</dbReference>
<dbReference type="Gene3D" id="3.40.50.1470">
    <property type="entry name" value="Peptidyl-tRNA hydrolase"/>
    <property type="match status" value="1"/>
</dbReference>
<dbReference type="HAMAP" id="MF_00083">
    <property type="entry name" value="Pept_tRNA_hydro_bact"/>
    <property type="match status" value="1"/>
</dbReference>
<dbReference type="InterPro" id="IPR001328">
    <property type="entry name" value="Pept_tRNA_hydro"/>
</dbReference>
<dbReference type="InterPro" id="IPR018171">
    <property type="entry name" value="Pept_tRNA_hydro_CS"/>
</dbReference>
<dbReference type="InterPro" id="IPR036416">
    <property type="entry name" value="Pept_tRNA_hydro_sf"/>
</dbReference>
<dbReference type="NCBIfam" id="TIGR00447">
    <property type="entry name" value="pth"/>
    <property type="match status" value="1"/>
</dbReference>
<dbReference type="PANTHER" id="PTHR17224">
    <property type="entry name" value="PEPTIDYL-TRNA HYDROLASE"/>
    <property type="match status" value="1"/>
</dbReference>
<dbReference type="PANTHER" id="PTHR17224:SF1">
    <property type="entry name" value="PEPTIDYL-TRNA HYDROLASE"/>
    <property type="match status" value="1"/>
</dbReference>
<dbReference type="Pfam" id="PF01195">
    <property type="entry name" value="Pept_tRNA_hydro"/>
    <property type="match status" value="1"/>
</dbReference>
<dbReference type="SUPFAM" id="SSF53178">
    <property type="entry name" value="Peptidyl-tRNA hydrolase-like"/>
    <property type="match status" value="1"/>
</dbReference>
<dbReference type="PROSITE" id="PS01195">
    <property type="entry name" value="PEPT_TRNA_HYDROL_1"/>
    <property type="match status" value="1"/>
</dbReference>
<dbReference type="PROSITE" id="PS01196">
    <property type="entry name" value="PEPT_TRNA_HYDROL_2"/>
    <property type="match status" value="1"/>
</dbReference>
<protein>
    <recommendedName>
        <fullName evidence="1">Peptidyl-tRNA hydrolase</fullName>
        <shortName evidence="1">Pth</shortName>
        <ecNumber evidence="1">3.1.1.29</ecNumber>
    </recommendedName>
</protein>
<organism>
    <name type="scientific">Burkholderia mallei (strain NCTC 10229)</name>
    <dbReference type="NCBI Taxonomy" id="412022"/>
    <lineage>
        <taxon>Bacteria</taxon>
        <taxon>Pseudomonadati</taxon>
        <taxon>Pseudomonadota</taxon>
        <taxon>Betaproteobacteria</taxon>
        <taxon>Burkholderiales</taxon>
        <taxon>Burkholderiaceae</taxon>
        <taxon>Burkholderia</taxon>
        <taxon>pseudomallei group</taxon>
    </lineage>
</organism>
<comment type="function">
    <text evidence="1">Hydrolyzes ribosome-free peptidyl-tRNAs (with 1 or more amino acids incorporated), which drop off the ribosome during protein synthesis, or as a result of ribosome stalling.</text>
</comment>
<comment type="function">
    <text evidence="1">Catalyzes the release of premature peptidyl moieties from peptidyl-tRNA molecules trapped in stalled 50S ribosomal subunits, and thus maintains levels of free tRNAs and 50S ribosomes.</text>
</comment>
<comment type="catalytic activity">
    <reaction evidence="1">
        <text>an N-acyl-L-alpha-aminoacyl-tRNA + H2O = an N-acyl-L-amino acid + a tRNA + H(+)</text>
        <dbReference type="Rhea" id="RHEA:54448"/>
        <dbReference type="Rhea" id="RHEA-COMP:10123"/>
        <dbReference type="Rhea" id="RHEA-COMP:13883"/>
        <dbReference type="ChEBI" id="CHEBI:15377"/>
        <dbReference type="ChEBI" id="CHEBI:15378"/>
        <dbReference type="ChEBI" id="CHEBI:59874"/>
        <dbReference type="ChEBI" id="CHEBI:78442"/>
        <dbReference type="ChEBI" id="CHEBI:138191"/>
        <dbReference type="EC" id="3.1.1.29"/>
    </reaction>
</comment>
<comment type="subunit">
    <text evidence="1">Monomer.</text>
</comment>
<comment type="subcellular location">
    <subcellularLocation>
        <location evidence="1">Cytoplasm</location>
    </subcellularLocation>
</comment>
<comment type="similarity">
    <text evidence="1">Belongs to the PTH family.</text>
</comment>
<keyword id="KW-0963">Cytoplasm</keyword>
<keyword id="KW-0378">Hydrolase</keyword>
<keyword id="KW-0694">RNA-binding</keyword>
<keyword id="KW-0820">tRNA-binding</keyword>
<accession>A2S6B4</accession>
<feature type="chain" id="PRO_1000010572" description="Peptidyl-tRNA hydrolase">
    <location>
        <begin position="1"/>
        <end position="201"/>
    </location>
</feature>
<feature type="active site" description="Proton acceptor" evidence="1">
    <location>
        <position position="20"/>
    </location>
</feature>
<feature type="binding site" evidence="1">
    <location>
        <position position="15"/>
    </location>
    <ligand>
        <name>tRNA</name>
        <dbReference type="ChEBI" id="CHEBI:17843"/>
    </ligand>
</feature>
<feature type="binding site" evidence="1">
    <location>
        <position position="66"/>
    </location>
    <ligand>
        <name>tRNA</name>
        <dbReference type="ChEBI" id="CHEBI:17843"/>
    </ligand>
</feature>
<feature type="binding site" evidence="1">
    <location>
        <position position="68"/>
    </location>
    <ligand>
        <name>tRNA</name>
        <dbReference type="ChEBI" id="CHEBI:17843"/>
    </ligand>
</feature>
<feature type="binding site" evidence="1">
    <location>
        <position position="114"/>
    </location>
    <ligand>
        <name>tRNA</name>
        <dbReference type="ChEBI" id="CHEBI:17843"/>
    </ligand>
</feature>
<feature type="site" description="Discriminates between blocked and unblocked aminoacyl-tRNA" evidence="1">
    <location>
        <position position="10"/>
    </location>
</feature>
<feature type="site" description="Stabilizes the basic form of H active site to accept a proton" evidence="1">
    <location>
        <position position="93"/>
    </location>
</feature>
<name>PTH_BURM9</name>
<gene>
    <name evidence="1" type="primary">pth</name>
    <name type="ordered locus">BMA10229_A1500</name>
</gene>
<reference key="1">
    <citation type="journal article" date="2010" name="Genome Biol. Evol.">
        <title>Continuing evolution of Burkholderia mallei through genome reduction and large-scale rearrangements.</title>
        <authorList>
            <person name="Losada L."/>
            <person name="Ronning C.M."/>
            <person name="DeShazer D."/>
            <person name="Woods D."/>
            <person name="Fedorova N."/>
            <person name="Kim H.S."/>
            <person name="Shabalina S.A."/>
            <person name="Pearson T.R."/>
            <person name="Brinkac L."/>
            <person name="Tan P."/>
            <person name="Nandi T."/>
            <person name="Crabtree J."/>
            <person name="Badger J."/>
            <person name="Beckstrom-Sternberg S."/>
            <person name="Saqib M."/>
            <person name="Schutzer S.E."/>
            <person name="Keim P."/>
            <person name="Nierman W.C."/>
        </authorList>
    </citation>
    <scope>NUCLEOTIDE SEQUENCE [LARGE SCALE GENOMIC DNA]</scope>
    <source>
        <strain>NCTC 10229</strain>
    </source>
</reference>